<evidence type="ECO:0000255" key="1">
    <source>
        <dbReference type="PROSITE-ProRule" id="PRU00490"/>
    </source>
</evidence>
<evidence type="ECO:0000305" key="2"/>
<accession>Q8Q0F9</accession>
<feature type="chain" id="PRO_0000089230" description="Macro domain-containing protein MM_0177">
    <location>
        <begin position="1"/>
        <end position="187"/>
    </location>
</feature>
<feature type="domain" description="Macro" evidence="1">
    <location>
        <begin position="8"/>
        <end position="187"/>
    </location>
</feature>
<protein>
    <recommendedName>
        <fullName>Macro domain-containing protein MM_0177</fullName>
    </recommendedName>
</protein>
<dbReference type="EMBL" id="AE008384">
    <property type="protein sequence ID" value="AAM29873.1"/>
    <property type="molecule type" value="Genomic_DNA"/>
</dbReference>
<dbReference type="SMR" id="Q8Q0F9"/>
<dbReference type="KEGG" id="mma:MM_0177"/>
<dbReference type="PATRIC" id="fig|192952.21.peg.211"/>
<dbReference type="eggNOG" id="arCOG04225">
    <property type="taxonomic scope" value="Archaea"/>
</dbReference>
<dbReference type="HOGENOM" id="CLU_046550_5_1_2"/>
<dbReference type="Proteomes" id="UP000000595">
    <property type="component" value="Chromosome"/>
</dbReference>
<dbReference type="GO" id="GO:0019213">
    <property type="term" value="F:deacetylase activity"/>
    <property type="evidence" value="ECO:0007669"/>
    <property type="project" value="TreeGrafter"/>
</dbReference>
<dbReference type="CDD" id="cd02908">
    <property type="entry name" value="Macro_OAADPr_deacetylase"/>
    <property type="match status" value="1"/>
</dbReference>
<dbReference type="Gene3D" id="3.40.220.10">
    <property type="entry name" value="Leucine Aminopeptidase, subunit E, domain 1"/>
    <property type="match status" value="1"/>
</dbReference>
<dbReference type="InterPro" id="IPR002589">
    <property type="entry name" value="Macro_dom"/>
</dbReference>
<dbReference type="InterPro" id="IPR043472">
    <property type="entry name" value="Macro_dom-like"/>
</dbReference>
<dbReference type="NCBIfam" id="NF001664">
    <property type="entry name" value="PRK00431.1-6"/>
    <property type="match status" value="1"/>
</dbReference>
<dbReference type="PANTHER" id="PTHR11106">
    <property type="entry name" value="GANGLIOSIDE INDUCED DIFFERENTIATION ASSOCIATED PROTEIN 2-RELATED"/>
    <property type="match status" value="1"/>
</dbReference>
<dbReference type="PANTHER" id="PTHR11106:SF27">
    <property type="entry name" value="MACRO DOMAIN-CONTAINING PROTEIN"/>
    <property type="match status" value="1"/>
</dbReference>
<dbReference type="Pfam" id="PF01661">
    <property type="entry name" value="Macro"/>
    <property type="match status" value="1"/>
</dbReference>
<dbReference type="SMART" id="SM00506">
    <property type="entry name" value="A1pp"/>
    <property type="match status" value="1"/>
</dbReference>
<dbReference type="SUPFAM" id="SSF52949">
    <property type="entry name" value="Macro domain-like"/>
    <property type="match status" value="1"/>
</dbReference>
<dbReference type="PROSITE" id="PS51154">
    <property type="entry name" value="MACRO"/>
    <property type="match status" value="1"/>
</dbReference>
<name>Y177_METMA</name>
<sequence length="187" mass="20362">MKNQNTRVEEGIRMELNIDRIRIFEGDIVKMRVDAIVNAANNTLLGGGGVDGAIHRAAGPALLEECKTLNGCPTGEAKITSGYLLPAKYIIHTVGPVWQGGEKGEDELLASCYRKSLELARDYKIKTIAFPAISTGAYGFPSERAAGIAVSQVKEFLQKNEIPETVYLVCYNKDSCKSIKKALSKIL</sequence>
<reference key="1">
    <citation type="journal article" date="2002" name="J. Mol. Microbiol. Biotechnol.">
        <title>The genome of Methanosarcina mazei: evidence for lateral gene transfer between Bacteria and Archaea.</title>
        <authorList>
            <person name="Deppenmeier U."/>
            <person name="Johann A."/>
            <person name="Hartsch T."/>
            <person name="Merkl R."/>
            <person name="Schmitz R.A."/>
            <person name="Martinez-Arias R."/>
            <person name="Henne A."/>
            <person name="Wiezer A."/>
            <person name="Baeumer S."/>
            <person name="Jacobi C."/>
            <person name="Brueggemann H."/>
            <person name="Lienard T."/>
            <person name="Christmann A."/>
            <person name="Boemecke M."/>
            <person name="Steckel S."/>
            <person name="Bhattacharyya A."/>
            <person name="Lykidis A."/>
            <person name="Overbeek R."/>
            <person name="Klenk H.-P."/>
            <person name="Gunsalus R.P."/>
            <person name="Fritz H.-J."/>
            <person name="Gottschalk G."/>
        </authorList>
    </citation>
    <scope>NUCLEOTIDE SEQUENCE [LARGE SCALE GENOMIC DNA]</scope>
    <source>
        <strain>ATCC BAA-159 / DSM 3647 / Goe1 / Go1 / JCM 11833 / OCM 88</strain>
    </source>
</reference>
<organism>
    <name type="scientific">Methanosarcina mazei (strain ATCC BAA-159 / DSM 3647 / Goe1 / Go1 / JCM 11833 / OCM 88)</name>
    <name type="common">Methanosarcina frisia</name>
    <dbReference type="NCBI Taxonomy" id="192952"/>
    <lineage>
        <taxon>Archaea</taxon>
        <taxon>Methanobacteriati</taxon>
        <taxon>Methanobacteriota</taxon>
        <taxon>Stenosarchaea group</taxon>
        <taxon>Methanomicrobia</taxon>
        <taxon>Methanosarcinales</taxon>
        <taxon>Methanosarcinaceae</taxon>
        <taxon>Methanosarcina</taxon>
    </lineage>
</organism>
<comment type="similarity">
    <text evidence="2">Belongs to the MacroD-type family.</text>
</comment>
<proteinExistence type="inferred from homology"/>
<gene>
    <name type="ordered locus">MM_0177</name>
</gene>